<sequence>MPRGQKSKLRAREKRRKARDETRGLNVPQVTEAEEEEAPCCSSSVSGGAASSSPAAGIPQEPQRAPTTAAAAAAGVSSTKSKKGAKSHQGEKNASSSQASTSTKSPSEDPLTRKSGSLVQFLLYKYKIKKSVTKGEMLKIVGKRFREHFPEILKKASEGLSVVFGLELNKVNPNGHTYTFIDKVDLTDEESLLSSWDFPRRKLLMPLLGVIFLNGNSATEEEIWEFLNMLGVYDGEEHSVFGEPWKLITKDLVQEKYLEYKQVPSSDPPRFQFLWGPRAYAETSKMKVLEFLAKVNGTTPCAFPTHYEEALKDEEKAGV</sequence>
<keyword id="KW-0597">Phosphoprotein</keyword>
<keyword id="KW-1267">Proteomics identification</keyword>
<keyword id="KW-1185">Reference proteome</keyword>
<keyword id="KW-0825">Tumor antigen</keyword>
<keyword id="KW-0833">Ubl conjugation pathway</keyword>
<protein>
    <recommendedName>
        <fullName>Melanoma-associated antigen B2</fullName>
    </recommendedName>
    <alternativeName>
        <fullName>Cancer/testis antigen 3.2</fullName>
        <shortName>CT3.2</shortName>
    </alternativeName>
    <alternativeName>
        <fullName>DSS-AHC critical interval MAGE superfamily 6</fullName>
        <shortName>DAM6</shortName>
    </alternativeName>
    <alternativeName>
        <fullName>MAGE XP-2 antigen</fullName>
    </alternativeName>
    <alternativeName>
        <fullName>MAGE-B2 antigen</fullName>
    </alternativeName>
</protein>
<organism>
    <name type="scientific">Homo sapiens</name>
    <name type="common">Human</name>
    <dbReference type="NCBI Taxonomy" id="9606"/>
    <lineage>
        <taxon>Eukaryota</taxon>
        <taxon>Metazoa</taxon>
        <taxon>Chordata</taxon>
        <taxon>Craniata</taxon>
        <taxon>Vertebrata</taxon>
        <taxon>Euteleostomi</taxon>
        <taxon>Mammalia</taxon>
        <taxon>Eutheria</taxon>
        <taxon>Euarchontoglires</taxon>
        <taxon>Primates</taxon>
        <taxon>Haplorrhini</taxon>
        <taxon>Catarrhini</taxon>
        <taxon>Hominidae</taxon>
        <taxon>Homo</taxon>
    </lineage>
</organism>
<evidence type="ECO:0000255" key="1">
    <source>
        <dbReference type="PROSITE-ProRule" id="PRU00127"/>
    </source>
</evidence>
<evidence type="ECO:0000256" key="2">
    <source>
        <dbReference type="SAM" id="MobiDB-lite"/>
    </source>
</evidence>
<evidence type="ECO:0000269" key="3">
    <source>
    </source>
</evidence>
<evidence type="ECO:0000269" key="4">
    <source>
    </source>
</evidence>
<evidence type="ECO:0000269" key="5">
    <source>
    </source>
</evidence>
<evidence type="ECO:0000269" key="6">
    <source>
    </source>
</evidence>
<evidence type="ECO:0007744" key="7">
    <source>
    </source>
</evidence>
<evidence type="ECO:0007744" key="8">
    <source>
    </source>
</evidence>
<feature type="chain" id="PRO_0000156713" description="Melanoma-associated antigen B2">
    <location>
        <begin position="1"/>
        <end position="319"/>
    </location>
</feature>
<feature type="domain" description="MAGE" evidence="1">
    <location>
        <begin position="111"/>
        <end position="310"/>
    </location>
</feature>
<feature type="region of interest" description="Disordered" evidence="2">
    <location>
        <begin position="1"/>
        <end position="112"/>
    </location>
</feature>
<feature type="compositionally biased region" description="Basic residues" evidence="2">
    <location>
        <begin position="1"/>
        <end position="17"/>
    </location>
</feature>
<feature type="compositionally biased region" description="Low complexity" evidence="2">
    <location>
        <begin position="39"/>
        <end position="57"/>
    </location>
</feature>
<feature type="compositionally biased region" description="Low complexity" evidence="2">
    <location>
        <begin position="67"/>
        <end position="79"/>
    </location>
</feature>
<feature type="compositionally biased region" description="Low complexity" evidence="2">
    <location>
        <begin position="94"/>
        <end position="105"/>
    </location>
</feature>
<feature type="modified residue" description="Phosphoserine" evidence="7 8">
    <location>
        <position position="77"/>
    </location>
</feature>
<feature type="modified residue" description="Phosphoserine" evidence="7 8">
    <location>
        <position position="105"/>
    </location>
</feature>
<feature type="sequence variant" id="VAR_027675" description="In dbSNP:rs2529541." evidence="3 5 6 7 8">
    <original>E</original>
    <variation>K</variation>
    <location>
        <position position="61"/>
    </location>
</feature>
<feature type="sequence variant" id="VAR_027676" description="In dbSNP:rs5972090.">
    <original>G</original>
    <variation>R</variation>
    <location>
        <position position="318"/>
    </location>
</feature>
<gene>
    <name type="primary">MAGEB2</name>
</gene>
<reference key="1">
    <citation type="journal article" date="1995" name="Mamm. Genome">
        <title>A family of rapidly evolving genes from the sex reversal critical region in Xp21.</title>
        <authorList>
            <person name="Dabovic B."/>
            <person name="Zanaria E."/>
            <person name="Bardoni B."/>
            <person name="Lisa A."/>
            <person name="Bordignon C."/>
            <person name="Russo V."/>
            <person name="Matessi C."/>
            <person name="Traversari C."/>
            <person name="Camerino G."/>
        </authorList>
    </citation>
    <scope>NUCLEOTIDE SEQUENCE [MRNA]</scope>
    <source>
        <tissue>Testis</tissue>
    </source>
</reference>
<reference key="2">
    <citation type="journal article" date="1997" name="Genomics">
        <title>Two members of the human MAGEB gene family located in Xp21.3 are expressed in tumors of various histological origins.</title>
        <authorList>
            <person name="Lurquin C."/>
            <person name="De Smet C."/>
            <person name="Brasseur F."/>
            <person name="Muscatelli F."/>
            <person name="Martelange V."/>
            <person name="De Plaen E."/>
            <person name="Brasseur R."/>
            <person name="Monaco A.P."/>
            <person name="Boon T."/>
        </authorList>
    </citation>
    <scope>NUCLEOTIDE SEQUENCE [GENOMIC DNA]</scope>
    <scope>VARIANT LYS-61</scope>
</reference>
<reference key="3">
    <citation type="journal article" date="1998" name="Mol. Genet. Metab.">
        <title>MAGE Xp-2: a member of the MAGE gene family isolated from an expression library using systemic lupus erythematosus sera.</title>
        <authorList>
            <person name="McCurdy D.K."/>
            <person name="Tai L.-Q."/>
            <person name="Nguyen J."/>
            <person name="Wang Z."/>
            <person name="Yang H.M."/>
            <person name="Udar N."/>
            <person name="Naiem F."/>
            <person name="Concannon P."/>
            <person name="Gatti R.A."/>
        </authorList>
    </citation>
    <scope>NUCLEOTIDE SEQUENCE [MRNA]</scope>
    <scope>VARIANT LYS-61</scope>
</reference>
<reference key="4">
    <citation type="journal article" date="2005" name="Nature">
        <title>The DNA sequence of the human X chromosome.</title>
        <authorList>
            <person name="Ross M.T."/>
            <person name="Grafham D.V."/>
            <person name="Coffey A.J."/>
            <person name="Scherer S."/>
            <person name="McLay K."/>
            <person name="Muzny D."/>
            <person name="Platzer M."/>
            <person name="Howell G.R."/>
            <person name="Burrows C."/>
            <person name="Bird C.P."/>
            <person name="Frankish A."/>
            <person name="Lovell F.L."/>
            <person name="Howe K.L."/>
            <person name="Ashurst J.L."/>
            <person name="Fulton R.S."/>
            <person name="Sudbrak R."/>
            <person name="Wen G."/>
            <person name="Jones M.C."/>
            <person name="Hurles M.E."/>
            <person name="Andrews T.D."/>
            <person name="Scott C.E."/>
            <person name="Searle S."/>
            <person name="Ramser J."/>
            <person name="Whittaker A."/>
            <person name="Deadman R."/>
            <person name="Carter N.P."/>
            <person name="Hunt S.E."/>
            <person name="Chen R."/>
            <person name="Cree A."/>
            <person name="Gunaratne P."/>
            <person name="Havlak P."/>
            <person name="Hodgson A."/>
            <person name="Metzker M.L."/>
            <person name="Richards S."/>
            <person name="Scott G."/>
            <person name="Steffen D."/>
            <person name="Sodergren E."/>
            <person name="Wheeler D.A."/>
            <person name="Worley K.C."/>
            <person name="Ainscough R."/>
            <person name="Ambrose K.D."/>
            <person name="Ansari-Lari M.A."/>
            <person name="Aradhya S."/>
            <person name="Ashwell R.I."/>
            <person name="Babbage A.K."/>
            <person name="Bagguley C.L."/>
            <person name="Ballabio A."/>
            <person name="Banerjee R."/>
            <person name="Barker G.E."/>
            <person name="Barlow K.F."/>
            <person name="Barrett I.P."/>
            <person name="Bates K.N."/>
            <person name="Beare D.M."/>
            <person name="Beasley H."/>
            <person name="Beasley O."/>
            <person name="Beck A."/>
            <person name="Bethel G."/>
            <person name="Blechschmidt K."/>
            <person name="Brady N."/>
            <person name="Bray-Allen S."/>
            <person name="Bridgeman A.M."/>
            <person name="Brown A.J."/>
            <person name="Brown M.J."/>
            <person name="Bonnin D."/>
            <person name="Bruford E.A."/>
            <person name="Buhay C."/>
            <person name="Burch P."/>
            <person name="Burford D."/>
            <person name="Burgess J."/>
            <person name="Burrill W."/>
            <person name="Burton J."/>
            <person name="Bye J.M."/>
            <person name="Carder C."/>
            <person name="Carrel L."/>
            <person name="Chako J."/>
            <person name="Chapman J.C."/>
            <person name="Chavez D."/>
            <person name="Chen E."/>
            <person name="Chen G."/>
            <person name="Chen Y."/>
            <person name="Chen Z."/>
            <person name="Chinault C."/>
            <person name="Ciccodicola A."/>
            <person name="Clark S.Y."/>
            <person name="Clarke G."/>
            <person name="Clee C.M."/>
            <person name="Clegg S."/>
            <person name="Clerc-Blankenburg K."/>
            <person name="Clifford K."/>
            <person name="Cobley V."/>
            <person name="Cole C.G."/>
            <person name="Conquer J.S."/>
            <person name="Corby N."/>
            <person name="Connor R.E."/>
            <person name="David R."/>
            <person name="Davies J."/>
            <person name="Davis C."/>
            <person name="Davis J."/>
            <person name="Delgado O."/>
            <person name="Deshazo D."/>
            <person name="Dhami P."/>
            <person name="Ding Y."/>
            <person name="Dinh H."/>
            <person name="Dodsworth S."/>
            <person name="Draper H."/>
            <person name="Dugan-Rocha S."/>
            <person name="Dunham A."/>
            <person name="Dunn M."/>
            <person name="Durbin K.J."/>
            <person name="Dutta I."/>
            <person name="Eades T."/>
            <person name="Ellwood M."/>
            <person name="Emery-Cohen A."/>
            <person name="Errington H."/>
            <person name="Evans K.L."/>
            <person name="Faulkner L."/>
            <person name="Francis F."/>
            <person name="Frankland J."/>
            <person name="Fraser A.E."/>
            <person name="Galgoczy P."/>
            <person name="Gilbert J."/>
            <person name="Gill R."/>
            <person name="Gloeckner G."/>
            <person name="Gregory S.G."/>
            <person name="Gribble S."/>
            <person name="Griffiths C."/>
            <person name="Grocock R."/>
            <person name="Gu Y."/>
            <person name="Gwilliam R."/>
            <person name="Hamilton C."/>
            <person name="Hart E.A."/>
            <person name="Hawes A."/>
            <person name="Heath P.D."/>
            <person name="Heitmann K."/>
            <person name="Hennig S."/>
            <person name="Hernandez J."/>
            <person name="Hinzmann B."/>
            <person name="Ho S."/>
            <person name="Hoffs M."/>
            <person name="Howden P.J."/>
            <person name="Huckle E.J."/>
            <person name="Hume J."/>
            <person name="Hunt P.J."/>
            <person name="Hunt A.R."/>
            <person name="Isherwood J."/>
            <person name="Jacob L."/>
            <person name="Johnson D."/>
            <person name="Jones S."/>
            <person name="de Jong P.J."/>
            <person name="Joseph S.S."/>
            <person name="Keenan S."/>
            <person name="Kelly S."/>
            <person name="Kershaw J.K."/>
            <person name="Khan Z."/>
            <person name="Kioschis P."/>
            <person name="Klages S."/>
            <person name="Knights A.J."/>
            <person name="Kosiura A."/>
            <person name="Kovar-Smith C."/>
            <person name="Laird G.K."/>
            <person name="Langford C."/>
            <person name="Lawlor S."/>
            <person name="Leversha M."/>
            <person name="Lewis L."/>
            <person name="Liu W."/>
            <person name="Lloyd C."/>
            <person name="Lloyd D.M."/>
            <person name="Loulseged H."/>
            <person name="Loveland J.E."/>
            <person name="Lovell J.D."/>
            <person name="Lozado R."/>
            <person name="Lu J."/>
            <person name="Lyne R."/>
            <person name="Ma J."/>
            <person name="Maheshwari M."/>
            <person name="Matthews L.H."/>
            <person name="McDowall J."/>
            <person name="McLaren S."/>
            <person name="McMurray A."/>
            <person name="Meidl P."/>
            <person name="Meitinger T."/>
            <person name="Milne S."/>
            <person name="Miner G."/>
            <person name="Mistry S.L."/>
            <person name="Morgan M."/>
            <person name="Morris S."/>
            <person name="Mueller I."/>
            <person name="Mullikin J.C."/>
            <person name="Nguyen N."/>
            <person name="Nordsiek G."/>
            <person name="Nyakatura G."/>
            <person name="O'dell C.N."/>
            <person name="Okwuonu G."/>
            <person name="Palmer S."/>
            <person name="Pandian R."/>
            <person name="Parker D."/>
            <person name="Parrish J."/>
            <person name="Pasternak S."/>
            <person name="Patel D."/>
            <person name="Pearce A.V."/>
            <person name="Pearson D.M."/>
            <person name="Pelan S.E."/>
            <person name="Perez L."/>
            <person name="Porter K.M."/>
            <person name="Ramsey Y."/>
            <person name="Reichwald K."/>
            <person name="Rhodes S."/>
            <person name="Ridler K.A."/>
            <person name="Schlessinger D."/>
            <person name="Schueler M.G."/>
            <person name="Sehra H.K."/>
            <person name="Shaw-Smith C."/>
            <person name="Shen H."/>
            <person name="Sheridan E.M."/>
            <person name="Shownkeen R."/>
            <person name="Skuce C.D."/>
            <person name="Smith M.L."/>
            <person name="Sotheran E.C."/>
            <person name="Steingruber H.E."/>
            <person name="Steward C.A."/>
            <person name="Storey R."/>
            <person name="Swann R.M."/>
            <person name="Swarbreck D."/>
            <person name="Tabor P.E."/>
            <person name="Taudien S."/>
            <person name="Taylor T."/>
            <person name="Teague B."/>
            <person name="Thomas K."/>
            <person name="Thorpe A."/>
            <person name="Timms K."/>
            <person name="Tracey A."/>
            <person name="Trevanion S."/>
            <person name="Tromans A.C."/>
            <person name="d'Urso M."/>
            <person name="Verduzco D."/>
            <person name="Villasana D."/>
            <person name="Waldron L."/>
            <person name="Wall M."/>
            <person name="Wang Q."/>
            <person name="Warren J."/>
            <person name="Warry G.L."/>
            <person name="Wei X."/>
            <person name="West A."/>
            <person name="Whitehead S.L."/>
            <person name="Whiteley M.N."/>
            <person name="Wilkinson J.E."/>
            <person name="Willey D.L."/>
            <person name="Williams G."/>
            <person name="Williams L."/>
            <person name="Williamson A."/>
            <person name="Williamson H."/>
            <person name="Wilming L."/>
            <person name="Woodmansey R.L."/>
            <person name="Wray P.W."/>
            <person name="Yen J."/>
            <person name="Zhang J."/>
            <person name="Zhou J."/>
            <person name="Zoghbi H."/>
            <person name="Zorilla S."/>
            <person name="Buck D."/>
            <person name="Reinhardt R."/>
            <person name="Poustka A."/>
            <person name="Rosenthal A."/>
            <person name="Lehrach H."/>
            <person name="Meindl A."/>
            <person name="Minx P.J."/>
            <person name="Hillier L.W."/>
            <person name="Willard H.F."/>
            <person name="Wilson R.K."/>
            <person name="Waterston R.H."/>
            <person name="Rice C.M."/>
            <person name="Vaudin M."/>
            <person name="Coulson A."/>
            <person name="Nelson D.L."/>
            <person name="Weinstock G."/>
            <person name="Sulston J.E."/>
            <person name="Durbin R.M."/>
            <person name="Hubbard T."/>
            <person name="Gibbs R.A."/>
            <person name="Beck S."/>
            <person name="Rogers J."/>
            <person name="Bentley D.R."/>
        </authorList>
    </citation>
    <scope>NUCLEOTIDE SEQUENCE [LARGE SCALE GENOMIC DNA]</scope>
</reference>
<reference key="5">
    <citation type="journal article" date="2004" name="Genome Res.">
        <title>The status, quality, and expansion of the NIH full-length cDNA project: the Mammalian Gene Collection (MGC).</title>
        <authorList>
            <consortium name="The MGC Project Team"/>
        </authorList>
    </citation>
    <scope>NUCLEOTIDE SEQUENCE [LARGE SCALE MRNA]</scope>
    <scope>VARIANT LYS-61</scope>
    <source>
        <tissue>Testis</tissue>
    </source>
</reference>
<reference key="6">
    <citation type="journal article" date="2008" name="Proc. Natl. Acad. Sci. U.S.A.">
        <title>A quantitative atlas of mitotic phosphorylation.</title>
        <authorList>
            <person name="Dephoure N."/>
            <person name="Zhou C."/>
            <person name="Villen J."/>
            <person name="Beausoleil S.A."/>
            <person name="Bakalarski C.E."/>
            <person name="Elledge S.J."/>
            <person name="Gygi S.P."/>
        </authorList>
    </citation>
    <scope>PHOSPHORYLATION [LARGE SCALE ANALYSIS] AT SER-77 AND SER-105</scope>
    <scope>VARIANT [LARGE SCALE ANALYSIS] LYS-61</scope>
    <scope>IDENTIFICATION BY MASS SPECTROMETRY [LARGE SCALE ANALYSIS]</scope>
    <source>
        <tissue>Cervix carcinoma</tissue>
    </source>
</reference>
<reference key="7">
    <citation type="journal article" date="2010" name="Mol. Cell">
        <title>MAGE-RING protein complexes comprise a family of E3 ubiquitin ligases.</title>
        <authorList>
            <person name="Doyle J.M."/>
            <person name="Gao J."/>
            <person name="Wang J."/>
            <person name="Yang M."/>
            <person name="Potts P.R."/>
        </authorList>
    </citation>
    <scope>FUNCTION</scope>
    <scope>INTERACTION WITH TRIM28</scope>
</reference>
<reference key="8">
    <citation type="journal article" date="2011" name="BMC Syst. Biol.">
        <title>Initial characterization of the human central proteome.</title>
        <authorList>
            <person name="Burkard T.R."/>
            <person name="Planyavsky M."/>
            <person name="Kaupe I."/>
            <person name="Breitwieser F.P."/>
            <person name="Buerckstuemmer T."/>
            <person name="Bennett K.L."/>
            <person name="Superti-Furga G."/>
            <person name="Colinge J."/>
        </authorList>
    </citation>
    <scope>IDENTIFICATION BY MASS SPECTROMETRY [LARGE SCALE ANALYSIS]</scope>
</reference>
<reference key="9">
    <citation type="journal article" date="2013" name="J. Proteome Res.">
        <title>Toward a comprehensive characterization of a human cancer cell phosphoproteome.</title>
        <authorList>
            <person name="Zhou H."/>
            <person name="Di Palma S."/>
            <person name="Preisinger C."/>
            <person name="Peng M."/>
            <person name="Polat A.N."/>
            <person name="Heck A.J."/>
            <person name="Mohammed S."/>
        </authorList>
    </citation>
    <scope>PHOSPHORYLATION [LARGE SCALE ANALYSIS] AT SER-77 AND SER-105</scope>
    <scope>VARIANT [LARGE SCALE ANALYSIS] LYS-61</scope>
    <scope>IDENTIFICATION BY MASS SPECTROMETRY [LARGE SCALE ANALYSIS]</scope>
    <source>
        <tissue>Erythroleukemia</tissue>
    </source>
</reference>
<proteinExistence type="evidence at protein level"/>
<dbReference type="EMBL" id="U93163">
    <property type="protein sequence ID" value="AAC23617.1"/>
    <property type="molecule type" value="Genomic_DNA"/>
</dbReference>
<dbReference type="EMBL" id="AF015766">
    <property type="protein sequence ID" value="AAD01565.1"/>
    <property type="molecule type" value="mRNA"/>
</dbReference>
<dbReference type="EMBL" id="AC005185">
    <property type="protein sequence ID" value="AAD10635.1"/>
    <property type="molecule type" value="Genomic_DNA"/>
</dbReference>
<dbReference type="EMBL" id="BC026071">
    <property type="protein sequence ID" value="AAH26071.1"/>
    <property type="molecule type" value="mRNA"/>
</dbReference>
<dbReference type="CCDS" id="CCDS14219.1"/>
<dbReference type="RefSeq" id="NP_002355.2">
    <property type="nucleotide sequence ID" value="NM_002364.5"/>
</dbReference>
<dbReference type="RefSeq" id="XP_011543814.1">
    <property type="nucleotide sequence ID" value="XM_011545512.2"/>
</dbReference>
<dbReference type="SMR" id="O15479"/>
<dbReference type="BioGRID" id="110287">
    <property type="interactions" value="363"/>
</dbReference>
<dbReference type="FunCoup" id="O15479">
    <property type="interactions" value="470"/>
</dbReference>
<dbReference type="IntAct" id="O15479">
    <property type="interactions" value="311"/>
</dbReference>
<dbReference type="MINT" id="O15479"/>
<dbReference type="STRING" id="9606.ENSP00000368273"/>
<dbReference type="GlyGen" id="O15479">
    <property type="glycosylation" value="1 site, 1 O-linked glycan (1 site)"/>
</dbReference>
<dbReference type="iPTMnet" id="O15479"/>
<dbReference type="PhosphoSitePlus" id="O15479"/>
<dbReference type="BioMuta" id="MAGEB2"/>
<dbReference type="jPOST" id="O15479"/>
<dbReference type="MassIVE" id="O15479"/>
<dbReference type="PaxDb" id="9606-ENSP00000368273"/>
<dbReference type="PeptideAtlas" id="O15479"/>
<dbReference type="ProteomicsDB" id="48684"/>
<dbReference type="Pumba" id="O15479"/>
<dbReference type="Antibodypedia" id="24654">
    <property type="antibodies" value="190 antibodies from 27 providers"/>
</dbReference>
<dbReference type="DNASU" id="4113"/>
<dbReference type="Ensembl" id="ENST00000378988.5">
    <property type="protein sequence ID" value="ENSP00000368273.4"/>
    <property type="gene ID" value="ENSG00000099399.6"/>
</dbReference>
<dbReference type="GeneID" id="4113"/>
<dbReference type="KEGG" id="hsa:4113"/>
<dbReference type="MANE-Select" id="ENST00000378988.5">
    <property type="protein sequence ID" value="ENSP00000368273.4"/>
    <property type="RefSeq nucleotide sequence ID" value="NM_002364.5"/>
    <property type="RefSeq protein sequence ID" value="NP_002355.2"/>
</dbReference>
<dbReference type="UCSC" id="uc004dbz.4">
    <property type="organism name" value="human"/>
</dbReference>
<dbReference type="AGR" id="HGNC:6809"/>
<dbReference type="CTD" id="4113"/>
<dbReference type="DisGeNET" id="4113"/>
<dbReference type="GeneCards" id="MAGEB2"/>
<dbReference type="HGNC" id="HGNC:6809">
    <property type="gene designation" value="MAGEB2"/>
</dbReference>
<dbReference type="HPA" id="ENSG00000099399">
    <property type="expression patterns" value="Tissue enriched (testis)"/>
</dbReference>
<dbReference type="MIM" id="300098">
    <property type="type" value="gene"/>
</dbReference>
<dbReference type="neXtProt" id="NX_O15479"/>
<dbReference type="OpenTargets" id="ENSG00000099399"/>
<dbReference type="PharmGKB" id="PA30555"/>
<dbReference type="VEuPathDB" id="HostDB:ENSG00000099399"/>
<dbReference type="eggNOG" id="KOG4562">
    <property type="taxonomic scope" value="Eukaryota"/>
</dbReference>
<dbReference type="GeneTree" id="ENSGT00940000155485"/>
<dbReference type="HOGENOM" id="CLU_039582_1_0_1"/>
<dbReference type="InParanoid" id="O15479"/>
<dbReference type="OMA" id="HKRNREQ"/>
<dbReference type="OrthoDB" id="205198at2759"/>
<dbReference type="PAN-GO" id="O15479">
    <property type="GO annotations" value="2 GO annotations based on evolutionary models"/>
</dbReference>
<dbReference type="PhylomeDB" id="O15479"/>
<dbReference type="TreeFam" id="TF328505"/>
<dbReference type="PathwayCommons" id="O15479"/>
<dbReference type="SignaLink" id="O15479"/>
<dbReference type="BioGRID-ORCS" id="4113">
    <property type="hits" value="5 hits in 778 CRISPR screens"/>
</dbReference>
<dbReference type="CD-CODE" id="91857CE7">
    <property type="entry name" value="Nucleolus"/>
</dbReference>
<dbReference type="ChiTaRS" id="MAGEB2">
    <property type="organism name" value="human"/>
</dbReference>
<dbReference type="GeneWiki" id="MAGEB2"/>
<dbReference type="GenomeRNAi" id="4113"/>
<dbReference type="Pharos" id="O15479">
    <property type="development level" value="Tbio"/>
</dbReference>
<dbReference type="PRO" id="PR:O15479"/>
<dbReference type="Proteomes" id="UP000005640">
    <property type="component" value="Chromosome X"/>
</dbReference>
<dbReference type="RNAct" id="O15479">
    <property type="molecule type" value="protein"/>
</dbReference>
<dbReference type="Bgee" id="ENSG00000099399">
    <property type="expression patterns" value="Expressed in male germ line stem cell (sensu Vertebrata) in testis and 34 other cell types or tissues"/>
</dbReference>
<dbReference type="GO" id="GO:0005634">
    <property type="term" value="C:nucleus"/>
    <property type="evidence" value="ECO:0000318"/>
    <property type="project" value="GO_Central"/>
</dbReference>
<dbReference type="GO" id="GO:0000122">
    <property type="term" value="P:negative regulation of transcription by RNA polymerase II"/>
    <property type="evidence" value="ECO:0000318"/>
    <property type="project" value="GO_Central"/>
</dbReference>
<dbReference type="FunFam" id="1.10.10.1200:FF:000007">
    <property type="entry name" value="Melanoma-associated antigen C2"/>
    <property type="match status" value="1"/>
</dbReference>
<dbReference type="FunFam" id="1.10.10.1210:FF:000001">
    <property type="entry name" value="melanoma-associated antigen D1"/>
    <property type="match status" value="1"/>
</dbReference>
<dbReference type="Gene3D" id="1.10.10.1200">
    <property type="entry name" value="MAGE homology domain, winged helix WH1 motif"/>
    <property type="match status" value="1"/>
</dbReference>
<dbReference type="Gene3D" id="1.10.10.1210">
    <property type="entry name" value="MAGE homology domain, winged helix WH2 motif"/>
    <property type="match status" value="1"/>
</dbReference>
<dbReference type="InterPro" id="IPR037445">
    <property type="entry name" value="MAGE"/>
</dbReference>
<dbReference type="InterPro" id="IPR021072">
    <property type="entry name" value="MAGE_N"/>
</dbReference>
<dbReference type="InterPro" id="IPR041898">
    <property type="entry name" value="MAGE_WH1"/>
</dbReference>
<dbReference type="InterPro" id="IPR041899">
    <property type="entry name" value="MAGE_WH2"/>
</dbReference>
<dbReference type="InterPro" id="IPR002190">
    <property type="entry name" value="MHD_dom"/>
</dbReference>
<dbReference type="PANTHER" id="PTHR11736:SF152">
    <property type="entry name" value="MELANOMA-ASSOCIATED ANTIGEN B2"/>
    <property type="match status" value="1"/>
</dbReference>
<dbReference type="PANTHER" id="PTHR11736">
    <property type="entry name" value="MELANOMA-ASSOCIATED ANTIGEN MAGE ANTIGEN"/>
    <property type="match status" value="1"/>
</dbReference>
<dbReference type="Pfam" id="PF01454">
    <property type="entry name" value="MAGE"/>
    <property type="match status" value="1"/>
</dbReference>
<dbReference type="Pfam" id="PF12440">
    <property type="entry name" value="MAGE_N"/>
    <property type="match status" value="1"/>
</dbReference>
<dbReference type="SMART" id="SM01373">
    <property type="entry name" value="MAGE"/>
    <property type="match status" value="1"/>
</dbReference>
<dbReference type="SMART" id="SM01392">
    <property type="entry name" value="MAGE_N"/>
    <property type="match status" value="1"/>
</dbReference>
<dbReference type="PROSITE" id="PS50838">
    <property type="entry name" value="MAGE"/>
    <property type="match status" value="1"/>
</dbReference>
<name>MAGB2_HUMAN</name>
<comment type="function">
    <text evidence="4">May enhance ubiquitin ligase activity of RING-type zinc finger-containing E3 ubiquitin-protein ligases. Proposed to act through recruitment and/or stabilization of the Ubl-conjugating enzyme (E2) at the E3:substrate complex.</text>
</comment>
<comment type="subunit">
    <text evidence="4">Interacts with TRIM28.</text>
</comment>
<comment type="interaction">
    <interactant intactId="EBI-1057615">
        <id>O15479</id>
    </interactant>
    <interactant intactId="EBI-5458244">
        <id>Q99856</id>
        <label>ARID3A</label>
    </interactant>
    <organismsDiffer>false</organismsDiffer>
    <experiments>3</experiments>
</comment>
<comment type="interaction">
    <interactant intactId="EBI-1057615">
        <id>O15479</id>
    </interactant>
    <interactant intactId="EBI-12024864">
        <id>Q96S94-5</id>
        <label>CCNL2</label>
    </interactant>
    <organismsDiffer>false</organismsDiffer>
    <experiments>3</experiments>
</comment>
<comment type="interaction">
    <interactant intactId="EBI-1057615">
        <id>O15479</id>
    </interactant>
    <interactant intactId="EBI-742054">
        <id>Q96D03</id>
        <label>DDIT4L</label>
    </interactant>
    <organismsDiffer>false</organismsDiffer>
    <experiments>3</experiments>
</comment>
<comment type="interaction">
    <interactant intactId="EBI-1057615">
        <id>O15479</id>
    </interactant>
    <interactant intactId="EBI-712452">
        <id>Q9BQ95</id>
        <label>ECSIT</label>
    </interactant>
    <organismsDiffer>false</organismsDiffer>
    <experiments>3</experiments>
</comment>
<comment type="interaction">
    <interactant intactId="EBI-1057615">
        <id>O15479</id>
    </interactant>
    <interactant intactId="EBI-400434">
        <id>P35637</id>
        <label>FUS</label>
    </interactant>
    <organismsDiffer>false</organismsDiffer>
    <experiments>3</experiments>
</comment>
<comment type="interaction">
    <interactant intactId="EBI-1057615">
        <id>O15479</id>
    </interactant>
    <interactant intactId="EBI-1050213">
        <id>Q96KN7</id>
        <label>RPGRIP1</label>
    </interactant>
    <organismsDiffer>false</organismsDiffer>
    <experiments>3</experiments>
</comment>
<comment type="interaction">
    <interactant intactId="EBI-1057615">
        <id>O15479</id>
    </interactant>
    <interactant intactId="EBI-2932492">
        <id>Q99757</id>
        <label>TXN2</label>
    </interactant>
    <organismsDiffer>false</organismsDiffer>
    <experiments>3</experiments>
</comment>
<comment type="interaction">
    <interactant intactId="EBI-1057615">
        <id>O15479</id>
    </interactant>
    <interactant intactId="EBI-740037">
        <id>O96006</id>
        <label>ZBED1</label>
    </interactant>
    <organismsDiffer>false</organismsDiffer>
    <experiments>3</experiments>
</comment>
<comment type="tissue specificity">
    <text>Expressed in testis and placenta, and in a significant fraction of tumors of various histologic types.</text>
</comment>
<accession>O15479</accession>
<accession>O75860</accession>